<comment type="function">
    <text>Involved in oxygen transport from gills to the various peripheral tissues.</text>
</comment>
<comment type="subunit">
    <text evidence="3">Heterotetramer of two alpha chains and two beta chains.</text>
</comment>
<comment type="tissue specificity">
    <text evidence="3">Red blood cells.</text>
</comment>
<comment type="mass spectrometry"/>
<comment type="similarity">
    <text evidence="1">Belongs to the globin family.</text>
</comment>
<keyword id="KW-0903">Direct protein sequencing</keyword>
<keyword id="KW-0349">Heme</keyword>
<keyword id="KW-0408">Iron</keyword>
<keyword id="KW-0479">Metal-binding</keyword>
<keyword id="KW-0561">Oxygen transport</keyword>
<keyword id="KW-1185">Reference proteome</keyword>
<keyword id="KW-0813">Transport</keyword>
<protein>
    <recommendedName>
        <fullName>Hemoglobin subunit beta-1</fullName>
    </recommendedName>
    <alternativeName>
        <fullName>Beta-1-globin</fullName>
    </alternativeName>
    <alternativeName>
        <fullName>Beta-A1-globin</fullName>
    </alternativeName>
    <alternativeName>
        <fullName>Hemoglobin beta-1 chain</fullName>
    </alternativeName>
</protein>
<feature type="initiator methionine" description="Removed">
    <location>
        <position position="1"/>
    </location>
</feature>
<feature type="chain" id="PRO_0000052895" description="Hemoglobin subunit beta-1">
    <location>
        <begin position="2"/>
        <end position="148"/>
    </location>
</feature>
<feature type="domain" description="Globin" evidence="1">
    <location>
        <begin position="3"/>
        <end position="148"/>
    </location>
</feature>
<feature type="binding site" description="distal binding residue" evidence="1">
    <location>
        <position position="64"/>
    </location>
    <ligand>
        <name>heme b</name>
        <dbReference type="ChEBI" id="CHEBI:60344"/>
    </ligand>
    <ligandPart>
        <name>Fe</name>
        <dbReference type="ChEBI" id="CHEBI:18248"/>
    </ligandPart>
</feature>
<feature type="binding site" description="proximal binding residue" evidence="1">
    <location>
        <position position="93"/>
    </location>
    <ligand>
        <name>heme b</name>
        <dbReference type="ChEBI" id="CHEBI:60344"/>
    </ligand>
    <ligandPart>
        <name>Fe</name>
        <dbReference type="ChEBI" id="CHEBI:18248"/>
    </ligandPart>
</feature>
<organism>
    <name type="scientific">Danio rerio</name>
    <name type="common">Zebrafish</name>
    <name type="synonym">Brachydanio rerio</name>
    <dbReference type="NCBI Taxonomy" id="7955"/>
    <lineage>
        <taxon>Eukaryota</taxon>
        <taxon>Metazoa</taxon>
        <taxon>Chordata</taxon>
        <taxon>Craniata</taxon>
        <taxon>Vertebrata</taxon>
        <taxon>Euteleostomi</taxon>
        <taxon>Actinopterygii</taxon>
        <taxon>Neopterygii</taxon>
        <taxon>Teleostei</taxon>
        <taxon>Ostariophysi</taxon>
        <taxon>Cypriniformes</taxon>
        <taxon>Danionidae</taxon>
        <taxon>Danioninae</taxon>
        <taxon>Danio</taxon>
    </lineage>
</organism>
<accession>Q90486</accession>
<accession>Q0P4G3</accession>
<accession>Q3B7Q0</accession>
<accession>Q90488</accession>
<reference evidence="3 4" key="1">
    <citation type="journal article" date="1997" name="Blood">
        <title>Characterization of adult alpha- and beta-globin genes in the zebrafish.</title>
        <authorList>
            <person name="Chan F.-Y."/>
            <person name="Robinson J."/>
            <person name="Brownlie A."/>
            <person name="Shivdasani R.A."/>
            <person name="Donovan A."/>
            <person name="Brugnara C."/>
            <person name="Kim J."/>
            <person name="Lau B.-C."/>
            <person name="Witkowska H.E."/>
            <person name="Zon L.I."/>
        </authorList>
    </citation>
    <scope>NUCLEOTIDE SEQUENCE [GENOMIC DNA / MRNA] (BA1)</scope>
    <scope>PARTIAL PROTEIN SEQUENCE</scope>
    <scope>MASS SPECTROMETRY</scope>
    <source>
        <tissue evidence="2">Kidney</tissue>
    </source>
</reference>
<reference key="2">
    <citation type="journal article" date="2013" name="Nature">
        <title>The zebrafish reference genome sequence and its relationship to the human genome.</title>
        <authorList>
            <person name="Howe K."/>
            <person name="Clark M.D."/>
            <person name="Torroja C.F."/>
            <person name="Torrance J."/>
            <person name="Berthelot C."/>
            <person name="Muffato M."/>
            <person name="Collins J.E."/>
            <person name="Humphray S."/>
            <person name="McLaren K."/>
            <person name="Matthews L."/>
            <person name="McLaren S."/>
            <person name="Sealy I."/>
            <person name="Caccamo M."/>
            <person name="Churcher C."/>
            <person name="Scott C."/>
            <person name="Barrett J.C."/>
            <person name="Koch R."/>
            <person name="Rauch G.J."/>
            <person name="White S."/>
            <person name="Chow W."/>
            <person name="Kilian B."/>
            <person name="Quintais L.T."/>
            <person name="Guerra-Assuncao J.A."/>
            <person name="Zhou Y."/>
            <person name="Gu Y."/>
            <person name="Yen J."/>
            <person name="Vogel J.H."/>
            <person name="Eyre T."/>
            <person name="Redmond S."/>
            <person name="Banerjee R."/>
            <person name="Chi J."/>
            <person name="Fu B."/>
            <person name="Langley E."/>
            <person name="Maguire S.F."/>
            <person name="Laird G.K."/>
            <person name="Lloyd D."/>
            <person name="Kenyon E."/>
            <person name="Donaldson S."/>
            <person name="Sehra H."/>
            <person name="Almeida-King J."/>
            <person name="Loveland J."/>
            <person name="Trevanion S."/>
            <person name="Jones M."/>
            <person name="Quail M."/>
            <person name="Willey D."/>
            <person name="Hunt A."/>
            <person name="Burton J."/>
            <person name="Sims S."/>
            <person name="McLay K."/>
            <person name="Plumb B."/>
            <person name="Davis J."/>
            <person name="Clee C."/>
            <person name="Oliver K."/>
            <person name="Clark R."/>
            <person name="Riddle C."/>
            <person name="Elliot D."/>
            <person name="Threadgold G."/>
            <person name="Harden G."/>
            <person name="Ware D."/>
            <person name="Begum S."/>
            <person name="Mortimore B."/>
            <person name="Kerry G."/>
            <person name="Heath P."/>
            <person name="Phillimore B."/>
            <person name="Tracey A."/>
            <person name="Corby N."/>
            <person name="Dunn M."/>
            <person name="Johnson C."/>
            <person name="Wood J."/>
            <person name="Clark S."/>
            <person name="Pelan S."/>
            <person name="Griffiths G."/>
            <person name="Smith M."/>
            <person name="Glithero R."/>
            <person name="Howden P."/>
            <person name="Barker N."/>
            <person name="Lloyd C."/>
            <person name="Stevens C."/>
            <person name="Harley J."/>
            <person name="Holt K."/>
            <person name="Panagiotidis G."/>
            <person name="Lovell J."/>
            <person name="Beasley H."/>
            <person name="Henderson C."/>
            <person name="Gordon D."/>
            <person name="Auger K."/>
            <person name="Wright D."/>
            <person name="Collins J."/>
            <person name="Raisen C."/>
            <person name="Dyer L."/>
            <person name="Leung K."/>
            <person name="Robertson L."/>
            <person name="Ambridge K."/>
            <person name="Leongamornlert D."/>
            <person name="McGuire S."/>
            <person name="Gilderthorp R."/>
            <person name="Griffiths C."/>
            <person name="Manthravadi D."/>
            <person name="Nichol S."/>
            <person name="Barker G."/>
            <person name="Whitehead S."/>
            <person name="Kay M."/>
            <person name="Brown J."/>
            <person name="Murnane C."/>
            <person name="Gray E."/>
            <person name="Humphries M."/>
            <person name="Sycamore N."/>
            <person name="Barker D."/>
            <person name="Saunders D."/>
            <person name="Wallis J."/>
            <person name="Babbage A."/>
            <person name="Hammond S."/>
            <person name="Mashreghi-Mohammadi M."/>
            <person name="Barr L."/>
            <person name="Martin S."/>
            <person name="Wray P."/>
            <person name="Ellington A."/>
            <person name="Matthews N."/>
            <person name="Ellwood M."/>
            <person name="Woodmansey R."/>
            <person name="Clark G."/>
            <person name="Cooper J."/>
            <person name="Tromans A."/>
            <person name="Grafham D."/>
            <person name="Skuce C."/>
            <person name="Pandian R."/>
            <person name="Andrews R."/>
            <person name="Harrison E."/>
            <person name="Kimberley A."/>
            <person name="Garnett J."/>
            <person name="Fosker N."/>
            <person name="Hall R."/>
            <person name="Garner P."/>
            <person name="Kelly D."/>
            <person name="Bird C."/>
            <person name="Palmer S."/>
            <person name="Gehring I."/>
            <person name="Berger A."/>
            <person name="Dooley C.M."/>
            <person name="Ersan-Urun Z."/>
            <person name="Eser C."/>
            <person name="Geiger H."/>
            <person name="Geisler M."/>
            <person name="Karotki L."/>
            <person name="Kirn A."/>
            <person name="Konantz J."/>
            <person name="Konantz M."/>
            <person name="Oberlander M."/>
            <person name="Rudolph-Geiger S."/>
            <person name="Teucke M."/>
            <person name="Lanz C."/>
            <person name="Raddatz G."/>
            <person name="Osoegawa K."/>
            <person name="Zhu B."/>
            <person name="Rapp A."/>
            <person name="Widaa S."/>
            <person name="Langford C."/>
            <person name="Yang F."/>
            <person name="Schuster S.C."/>
            <person name="Carter N.P."/>
            <person name="Harrow J."/>
            <person name="Ning Z."/>
            <person name="Herrero J."/>
            <person name="Searle S.M."/>
            <person name="Enright A."/>
            <person name="Geisler R."/>
            <person name="Plasterk R.H."/>
            <person name="Lee C."/>
            <person name="Westerfield M."/>
            <person name="de Jong P.J."/>
            <person name="Zon L.I."/>
            <person name="Postlethwait J.H."/>
            <person name="Nusslein-Volhard C."/>
            <person name="Hubbard T.J."/>
            <person name="Roest Crollius H."/>
            <person name="Rogers J."/>
            <person name="Stemple D.L."/>
        </authorList>
    </citation>
    <scope>NUCLEOTIDE SEQUENCE [LARGE SCALE GENOMIC DNA] (BA1 AND BA1L)</scope>
    <source>
        <strain>Tuebingen</strain>
    </source>
</reference>
<reference evidence="3 5" key="3">
    <citation type="submission" date="2006-08" db="EMBL/GenBank/DDBJ databases">
        <authorList>
            <consortium name="NIH - Zebrafish Gene Collection (ZGC) project"/>
        </authorList>
    </citation>
    <scope>NUCLEOTIDE SEQUENCE [LARGE SCALE MRNA] (BA1 AND BA1L)</scope>
    <source>
        <strain>AB</strain>
        <tissue>Gill</tissue>
        <tissue>Liver</tissue>
    </source>
</reference>
<gene>
    <name type="primary">ba1</name>
    <name type="ORF">si:by187g17.2</name>
    <name type="ORF">zgc:123164</name>
</gene>
<gene>
    <name type="primary">ba1l</name>
    <name type="ORF">si:by187g17.4</name>
</gene>
<evidence type="ECO:0000255" key="1">
    <source>
        <dbReference type="PROSITE-ProRule" id="PRU00238"/>
    </source>
</evidence>
<evidence type="ECO:0000269" key="2">
    <source>
    </source>
</evidence>
<evidence type="ECO:0000305" key="3"/>
<evidence type="ECO:0000312" key="4">
    <source>
        <dbReference type="EMBL" id="AAB05403.1"/>
    </source>
</evidence>
<evidence type="ECO:0000312" key="5">
    <source>
        <dbReference type="EMBL" id="CAE48983.1"/>
    </source>
</evidence>
<sequence>MVEWTDAERTAILGLWGKLNIDEIGPQALSRCLIVYPWTQRYFATFGNLSSPAAIMGNPKVAAHGRTVMGGLERAIKNMDNVKNTYAALSVMHSEKLHVDPDNFRLLADCITVCAAMKFGQAGFNADVQEAWQKFLAVVVSALCRQYH</sequence>
<dbReference type="EMBL" id="U50380">
    <property type="protein sequence ID" value="AAB05403.1"/>
    <property type="molecule type" value="mRNA"/>
</dbReference>
<dbReference type="EMBL" id="U50382">
    <property type="protein sequence ID" value="AAB05405.1"/>
    <property type="molecule type" value="Genomic_DNA"/>
</dbReference>
<dbReference type="EMBL" id="AL929176">
    <property type="protein sequence ID" value="CAE48983.1"/>
    <property type="molecule type" value="Genomic_DNA"/>
</dbReference>
<dbReference type="EMBL" id="AL929176">
    <property type="protein sequence ID" value="CAE48988.1"/>
    <property type="molecule type" value="Genomic_DNA"/>
</dbReference>
<dbReference type="EMBL" id="BC107513">
    <property type="protein sequence ID" value="AAI07514.1"/>
    <property type="molecule type" value="mRNA"/>
</dbReference>
<dbReference type="EMBL" id="BC122092">
    <property type="protein sequence ID" value="AAI22093.1"/>
    <property type="molecule type" value="mRNA"/>
</dbReference>
<dbReference type="RefSeq" id="NP_001013045.1">
    <property type="nucleotide sequence ID" value="NM_001013027.1"/>
</dbReference>
<dbReference type="RefSeq" id="NP_571095.1">
    <property type="nucleotide sequence ID" value="NM_131020.2"/>
</dbReference>
<dbReference type="SMR" id="Q90486"/>
<dbReference type="FunCoup" id="Q90486">
    <property type="interactions" value="1046"/>
</dbReference>
<dbReference type="STRING" id="7955.ENSDARP00000092488"/>
<dbReference type="PaxDb" id="7955-ENSDARP00000092488"/>
<dbReference type="Ensembl" id="ENSDART00000101713">
    <property type="protein sequence ID" value="ENSDARP00000092488"/>
    <property type="gene ID" value="ENSDARG00000089087"/>
</dbReference>
<dbReference type="Ensembl" id="ENSDART00000130869">
    <property type="protein sequence ID" value="ENSDARP00000109518"/>
    <property type="gene ID" value="ENSDARG00000097238"/>
</dbReference>
<dbReference type="GeneID" id="30216"/>
<dbReference type="GeneID" id="504174"/>
<dbReference type="KEGG" id="dre:30216"/>
<dbReference type="KEGG" id="dre:504174"/>
<dbReference type="AGR" id="ZFIN:ZDB-GENE-990415-18"/>
<dbReference type="CTD" id="30216"/>
<dbReference type="CTD" id="504174"/>
<dbReference type="ZFIN" id="ZDB-GENE-990415-18">
    <property type="gene designation" value="hbba1"/>
</dbReference>
<dbReference type="eggNOG" id="KOG3378">
    <property type="taxonomic scope" value="Eukaryota"/>
</dbReference>
<dbReference type="HOGENOM" id="CLU_003827_10_0_1"/>
<dbReference type="InParanoid" id="Q90486"/>
<dbReference type="OMA" id="ICLAEHF"/>
<dbReference type="OrthoDB" id="9886081at2759"/>
<dbReference type="PhylomeDB" id="Q90486"/>
<dbReference type="TreeFam" id="TF333268"/>
<dbReference type="Reactome" id="R-DRE-1237044">
    <property type="pathway name" value="Erythrocytes take up carbon dioxide and release oxygen"/>
</dbReference>
<dbReference type="Reactome" id="R-DRE-1247673">
    <property type="pathway name" value="Erythrocytes take up oxygen and release carbon dioxide"/>
</dbReference>
<dbReference type="Reactome" id="R-DRE-2168880">
    <property type="pathway name" value="Scavenging of heme from plasma"/>
</dbReference>
<dbReference type="Reactome" id="R-DRE-6798695">
    <property type="pathway name" value="Neutrophil degranulation"/>
</dbReference>
<dbReference type="Reactome" id="R-DRE-9707564">
    <property type="pathway name" value="Cytoprotection by HMOX1"/>
</dbReference>
<dbReference type="Reactome" id="R-DRE-9707616">
    <property type="pathway name" value="Heme signaling"/>
</dbReference>
<dbReference type="PRO" id="PR:Q90486"/>
<dbReference type="Proteomes" id="UP000000437">
    <property type="component" value="Chromosome 3"/>
</dbReference>
<dbReference type="Bgee" id="ENSDARG00000089087">
    <property type="expression patterns" value="Expressed in spleen and 16 other cell types or tissues"/>
</dbReference>
<dbReference type="ExpressionAtlas" id="Q90486">
    <property type="expression patterns" value="differential"/>
</dbReference>
<dbReference type="GO" id="GO:0031838">
    <property type="term" value="C:haptoglobin-hemoglobin complex"/>
    <property type="evidence" value="ECO:0000318"/>
    <property type="project" value="GO_Central"/>
</dbReference>
<dbReference type="GO" id="GO:0005833">
    <property type="term" value="C:hemoglobin complex"/>
    <property type="evidence" value="ECO:0000250"/>
    <property type="project" value="UniProtKB"/>
</dbReference>
<dbReference type="GO" id="GO:0020037">
    <property type="term" value="F:heme binding"/>
    <property type="evidence" value="ECO:0000318"/>
    <property type="project" value="GO_Central"/>
</dbReference>
<dbReference type="GO" id="GO:0046872">
    <property type="term" value="F:metal ion binding"/>
    <property type="evidence" value="ECO:0007669"/>
    <property type="project" value="UniProtKB-KW"/>
</dbReference>
<dbReference type="GO" id="GO:0019825">
    <property type="term" value="F:oxygen binding"/>
    <property type="evidence" value="ECO:0000318"/>
    <property type="project" value="GO_Central"/>
</dbReference>
<dbReference type="GO" id="GO:0005344">
    <property type="term" value="F:oxygen carrier activity"/>
    <property type="evidence" value="ECO:0000250"/>
    <property type="project" value="UniProtKB"/>
</dbReference>
<dbReference type="GO" id="GO:0098869">
    <property type="term" value="P:cellular oxidant detoxification"/>
    <property type="evidence" value="ECO:0007669"/>
    <property type="project" value="GOC"/>
</dbReference>
<dbReference type="GO" id="GO:0030097">
    <property type="term" value="P:hemopoiesis"/>
    <property type="evidence" value="ECO:0000250"/>
    <property type="project" value="UniProtKB"/>
</dbReference>
<dbReference type="GO" id="GO:0042744">
    <property type="term" value="P:hydrogen peroxide catabolic process"/>
    <property type="evidence" value="ECO:0000318"/>
    <property type="project" value="GO_Central"/>
</dbReference>
<dbReference type="GO" id="GO:0015671">
    <property type="term" value="P:oxygen transport"/>
    <property type="evidence" value="ECO:0000250"/>
    <property type="project" value="UniProtKB"/>
</dbReference>
<dbReference type="GO" id="GO:0001666">
    <property type="term" value="P:response to hypoxia"/>
    <property type="evidence" value="ECO:0000314"/>
    <property type="project" value="ZFIN"/>
</dbReference>
<dbReference type="CDD" id="cd08925">
    <property type="entry name" value="Hb-beta-like"/>
    <property type="match status" value="1"/>
</dbReference>
<dbReference type="FunFam" id="1.10.490.10:FF:000001">
    <property type="entry name" value="Hemoglobin subunit beta"/>
    <property type="match status" value="1"/>
</dbReference>
<dbReference type="Gene3D" id="1.10.490.10">
    <property type="entry name" value="Globins"/>
    <property type="match status" value="1"/>
</dbReference>
<dbReference type="InterPro" id="IPR000971">
    <property type="entry name" value="Globin"/>
</dbReference>
<dbReference type="InterPro" id="IPR009050">
    <property type="entry name" value="Globin-like_sf"/>
</dbReference>
<dbReference type="InterPro" id="IPR012292">
    <property type="entry name" value="Globin/Proto"/>
</dbReference>
<dbReference type="InterPro" id="IPR002337">
    <property type="entry name" value="Hemoglobin_b"/>
</dbReference>
<dbReference type="InterPro" id="IPR050056">
    <property type="entry name" value="Hemoglobin_oxygen_transport"/>
</dbReference>
<dbReference type="PANTHER" id="PTHR11442">
    <property type="entry name" value="HEMOGLOBIN FAMILY MEMBER"/>
    <property type="match status" value="1"/>
</dbReference>
<dbReference type="PANTHER" id="PTHR11442:SF102">
    <property type="entry name" value="HEMOGLOBIN SUBUNIT BETA-1-RELATED"/>
    <property type="match status" value="1"/>
</dbReference>
<dbReference type="Pfam" id="PF00042">
    <property type="entry name" value="Globin"/>
    <property type="match status" value="1"/>
</dbReference>
<dbReference type="PRINTS" id="PR00814">
    <property type="entry name" value="BETAHAEM"/>
</dbReference>
<dbReference type="SUPFAM" id="SSF46458">
    <property type="entry name" value="Globin-like"/>
    <property type="match status" value="1"/>
</dbReference>
<dbReference type="PROSITE" id="PS01033">
    <property type="entry name" value="GLOBIN"/>
    <property type="match status" value="1"/>
</dbReference>
<name>HBB1_DANRE</name>
<proteinExistence type="evidence at protein level"/>